<sequence length="728" mass="83227">MDDASVLKYLQENPKLVEDFVVSNEISPETFKRWAVRRTMKYKNVKNGTSGGTGAWTEPDLSMKRRVILETSDNRTRILYEITQCCGQLIGTNSIELIVQNDEGAFSCRKTENGELKLKKVKTSKSADYIQTIVNAGNQTIAEIHFYTQLDSTEKSIVNAVCTWAAATNYYSELYTHKQEGSDGQDIHENIAKQRKLSNFLLDVARSIFHDIVSMDAVIIKVMNFAQKLVDADRASLFLVDSKNAQIYARIFDVGTGDEEHVRVNSEGQKEIRFDMSKGIAGYVASTGEGLNIENAYEDERFNADVDSKTGYTTKTILCMPILIRGIVIGVVQMVNKHDGVFTRQDEDAFEIFAVYCGLALHHAKLYDKIRRSEQKYRVALEVLAYHSVCNADEVNKLKKIEINNRIVELETIDFNGMRLSELEKPLYAVYMFKTLFADTLRFDTEDLIRFVLTVRKNYRRVAYHNWAHGWSVAHAMFATLMNSPDAFTKLEALALYVSCLCHDLDHRGKNNAYMKTMSTPLASIYSTSVMERHHFNQTVTILQQDGHNILKSLSSEDYKKTLSLIKHCILATDLALFFSNKAKLNVILDNNTFDINRQEHRLLTQAVMMTGCDLVASAKPWNIQTETVKVIFEEFYDQGDAERLSGKEPIPMMDRQQAHMLPQMQVGFMRGICMPCYDLIARIFPKNDKMRERCEYNAKKWEELAEEQRKKQEALAQQNGEANETQE</sequence>
<dbReference type="EC" id="3.1.4.17"/>
<dbReference type="EMBL" id="FO080144">
    <property type="protein sequence ID" value="CCD61583.1"/>
    <property type="molecule type" value="Genomic_DNA"/>
</dbReference>
<dbReference type="PIR" id="T25590">
    <property type="entry name" value="T25590"/>
</dbReference>
<dbReference type="RefSeq" id="NP_491544.3">
    <property type="nucleotide sequence ID" value="NM_059143.4"/>
</dbReference>
<dbReference type="SMR" id="P91119"/>
<dbReference type="BioGRID" id="47958">
    <property type="interactions" value="1"/>
</dbReference>
<dbReference type="FunCoup" id="P91119">
    <property type="interactions" value="744"/>
</dbReference>
<dbReference type="STRING" id="6239.C32E12.2.1"/>
<dbReference type="PaxDb" id="6239-C32E12.2"/>
<dbReference type="PeptideAtlas" id="P91119"/>
<dbReference type="EnsemblMetazoa" id="C32E12.2.1">
    <property type="protein sequence ID" value="C32E12.2.1"/>
    <property type="gene ID" value="WBGene00016328"/>
</dbReference>
<dbReference type="GeneID" id="183125"/>
<dbReference type="KEGG" id="cel:CELE_C32E12.2"/>
<dbReference type="UCSC" id="C32E12.2">
    <property type="organism name" value="c. elegans"/>
</dbReference>
<dbReference type="AGR" id="WB:WBGene00016328"/>
<dbReference type="CTD" id="183125"/>
<dbReference type="WormBase" id="C32E12.2">
    <property type="protein sequence ID" value="CE45692"/>
    <property type="gene ID" value="WBGene00016328"/>
    <property type="gene designation" value="pde-5"/>
</dbReference>
<dbReference type="eggNOG" id="KOG3689">
    <property type="taxonomic scope" value="Eukaryota"/>
</dbReference>
<dbReference type="GeneTree" id="ENSGT00940000156543"/>
<dbReference type="HOGENOM" id="CLU_006980_1_1_1"/>
<dbReference type="InParanoid" id="P91119"/>
<dbReference type="OMA" id="YNAKKWE"/>
<dbReference type="OrthoDB" id="295473at2759"/>
<dbReference type="PhylomeDB" id="P91119"/>
<dbReference type="Reactome" id="R-CEL-418457">
    <property type="pathway name" value="cGMP effects"/>
</dbReference>
<dbReference type="Reactome" id="R-CEL-418555">
    <property type="pathway name" value="G alpha (s) signalling events"/>
</dbReference>
<dbReference type="PRO" id="PR:P91119"/>
<dbReference type="Proteomes" id="UP000001940">
    <property type="component" value="Chromosome I"/>
</dbReference>
<dbReference type="Bgee" id="WBGene00016328">
    <property type="expression patterns" value="Expressed in pharyngeal muscle cell (C elegans) and 2 other cell types or tissues"/>
</dbReference>
<dbReference type="GO" id="GO:0004118">
    <property type="term" value="F:3',5'-cGMP-stimulated cyclic-nucleotide phosphodiesterase activity"/>
    <property type="evidence" value="ECO:0000318"/>
    <property type="project" value="GO_Central"/>
</dbReference>
<dbReference type="GO" id="GO:0004115">
    <property type="term" value="F:3',5'-cyclic-AMP phosphodiesterase activity"/>
    <property type="evidence" value="ECO:0000318"/>
    <property type="project" value="GO_Central"/>
</dbReference>
<dbReference type="GO" id="GO:0047555">
    <property type="term" value="F:3',5'-cyclic-GMP phosphodiesterase activity"/>
    <property type="evidence" value="ECO:0000250"/>
    <property type="project" value="WormBase"/>
</dbReference>
<dbReference type="GO" id="GO:0046872">
    <property type="term" value="F:metal ion binding"/>
    <property type="evidence" value="ECO:0007669"/>
    <property type="project" value="UniProtKB-KW"/>
</dbReference>
<dbReference type="GO" id="GO:0019933">
    <property type="term" value="P:cAMP-mediated signaling"/>
    <property type="evidence" value="ECO:0000318"/>
    <property type="project" value="GO_Central"/>
</dbReference>
<dbReference type="GO" id="GO:0007635">
    <property type="term" value="P:chemosensory behavior"/>
    <property type="evidence" value="ECO:0000316"/>
    <property type="project" value="UniProtKB"/>
</dbReference>
<dbReference type="GO" id="GO:0006935">
    <property type="term" value="P:chemotaxis"/>
    <property type="evidence" value="ECO:0000316"/>
    <property type="project" value="UniProtKB"/>
</dbReference>
<dbReference type="GO" id="GO:0008340">
    <property type="term" value="P:determination of adult lifespan"/>
    <property type="evidence" value="ECO:0000316"/>
    <property type="project" value="UniProtKB"/>
</dbReference>
<dbReference type="GO" id="GO:0032528">
    <property type="term" value="P:microvillus organization"/>
    <property type="evidence" value="ECO:0000316"/>
    <property type="project" value="WormBase"/>
</dbReference>
<dbReference type="GO" id="GO:0010754">
    <property type="term" value="P:negative regulation of cGMP-mediated signaling"/>
    <property type="evidence" value="ECO:0000316"/>
    <property type="project" value="UniProtKB"/>
</dbReference>
<dbReference type="GO" id="GO:0007602">
    <property type="term" value="P:phototransduction"/>
    <property type="evidence" value="ECO:0000316"/>
    <property type="project" value="UniProtKB"/>
</dbReference>
<dbReference type="GO" id="GO:0010628">
    <property type="term" value="P:positive regulation of gene expression"/>
    <property type="evidence" value="ECO:0000316"/>
    <property type="project" value="UniProtKB"/>
</dbReference>
<dbReference type="GO" id="GO:0010446">
    <property type="term" value="P:response to alkaline pH"/>
    <property type="evidence" value="ECO:0000316"/>
    <property type="project" value="UniProtKB"/>
</dbReference>
<dbReference type="GO" id="GO:0042542">
    <property type="term" value="P:response to hydrogen peroxide"/>
    <property type="evidence" value="ECO:0000316"/>
    <property type="project" value="UniProtKB"/>
</dbReference>
<dbReference type="CDD" id="cd00077">
    <property type="entry name" value="HDc"/>
    <property type="match status" value="1"/>
</dbReference>
<dbReference type="FunFam" id="1.10.1300.10:FF:000003">
    <property type="entry name" value="Phosphodiesterase"/>
    <property type="match status" value="1"/>
</dbReference>
<dbReference type="FunFam" id="3.30.450.40:FF:000067">
    <property type="entry name" value="Phosphodiesterase"/>
    <property type="match status" value="1"/>
</dbReference>
<dbReference type="Gene3D" id="3.30.450.40">
    <property type="match status" value="1"/>
</dbReference>
<dbReference type="Gene3D" id="1.10.1300.10">
    <property type="entry name" value="3'5'-cyclic nucleotide phosphodiesterase, catalytic domain"/>
    <property type="match status" value="1"/>
</dbReference>
<dbReference type="InterPro" id="IPR003018">
    <property type="entry name" value="GAF"/>
</dbReference>
<dbReference type="InterPro" id="IPR029016">
    <property type="entry name" value="GAF-like_dom_sf"/>
</dbReference>
<dbReference type="InterPro" id="IPR003607">
    <property type="entry name" value="HD/PDEase_dom"/>
</dbReference>
<dbReference type="InterPro" id="IPR023088">
    <property type="entry name" value="PDEase"/>
</dbReference>
<dbReference type="InterPro" id="IPR002073">
    <property type="entry name" value="PDEase_catalytic_dom"/>
</dbReference>
<dbReference type="InterPro" id="IPR036971">
    <property type="entry name" value="PDEase_catalytic_dom_sf"/>
</dbReference>
<dbReference type="InterPro" id="IPR023174">
    <property type="entry name" value="PDEase_CS"/>
</dbReference>
<dbReference type="PANTHER" id="PTHR11347">
    <property type="entry name" value="CYCLIC NUCLEOTIDE PHOSPHODIESTERASE"/>
    <property type="match status" value="1"/>
</dbReference>
<dbReference type="Pfam" id="PF01590">
    <property type="entry name" value="GAF"/>
    <property type="match status" value="1"/>
</dbReference>
<dbReference type="Pfam" id="PF00233">
    <property type="entry name" value="PDEase_I"/>
    <property type="match status" value="1"/>
</dbReference>
<dbReference type="PRINTS" id="PR00387">
    <property type="entry name" value="PDIESTERASE1"/>
</dbReference>
<dbReference type="SMART" id="SM00065">
    <property type="entry name" value="GAF"/>
    <property type="match status" value="1"/>
</dbReference>
<dbReference type="SMART" id="SM00471">
    <property type="entry name" value="HDc"/>
    <property type="match status" value="1"/>
</dbReference>
<dbReference type="SUPFAM" id="SSF55781">
    <property type="entry name" value="GAF domain-like"/>
    <property type="match status" value="1"/>
</dbReference>
<dbReference type="SUPFAM" id="SSF109604">
    <property type="entry name" value="HD-domain/PDEase-like"/>
    <property type="match status" value="1"/>
</dbReference>
<dbReference type="PROSITE" id="PS00126">
    <property type="entry name" value="PDEASE_I_1"/>
    <property type="match status" value="1"/>
</dbReference>
<dbReference type="PROSITE" id="PS51845">
    <property type="entry name" value="PDEASE_I_2"/>
    <property type="match status" value="1"/>
</dbReference>
<gene>
    <name type="primary">pde-5</name>
    <name type="ORF">C32E12.2</name>
</gene>
<evidence type="ECO:0000250" key="1"/>
<evidence type="ECO:0000255" key="2"/>
<evidence type="ECO:0000255" key="3">
    <source>
        <dbReference type="PROSITE-ProRule" id="PRU01192"/>
    </source>
</evidence>
<evidence type="ECO:0000256" key="4">
    <source>
        <dbReference type="SAM" id="MobiDB-lite"/>
    </source>
</evidence>
<evidence type="ECO:0000269" key="5">
    <source>
    </source>
</evidence>
<evidence type="ECO:0000305" key="6"/>
<feature type="chain" id="PRO_0000198848" description="Probable 3',5'-cyclic phosphodiesterase pde-5">
    <location>
        <begin position="1"/>
        <end position="728"/>
    </location>
</feature>
<feature type="domain" description="GAF">
    <location>
        <begin position="214"/>
        <end position="371"/>
    </location>
</feature>
<feature type="domain" description="PDEase" evidence="3">
    <location>
        <begin position="390"/>
        <end position="709"/>
    </location>
</feature>
<feature type="region of interest" description="Disordered" evidence="4">
    <location>
        <begin position="708"/>
        <end position="728"/>
    </location>
</feature>
<feature type="coiled-coil region" evidence="2">
    <location>
        <begin position="691"/>
        <end position="728"/>
    </location>
</feature>
<feature type="compositionally biased region" description="Polar residues" evidence="4">
    <location>
        <begin position="716"/>
        <end position="728"/>
    </location>
</feature>
<feature type="active site" description="Proton donor" evidence="1">
    <location>
        <position position="465"/>
    </location>
</feature>
<feature type="binding site" evidence="1">
    <location>
        <position position="469"/>
    </location>
    <ligand>
        <name>a divalent metal cation</name>
        <dbReference type="ChEBI" id="CHEBI:60240"/>
        <label>1</label>
    </ligand>
</feature>
<feature type="binding site" evidence="1">
    <location>
        <position position="503"/>
    </location>
    <ligand>
        <name>a divalent metal cation</name>
        <dbReference type="ChEBI" id="CHEBI:60240"/>
        <label>1</label>
    </ligand>
</feature>
<feature type="binding site" evidence="1">
    <location>
        <position position="504"/>
    </location>
    <ligand>
        <name>a divalent metal cation</name>
        <dbReference type="ChEBI" id="CHEBI:60240"/>
        <label>1</label>
    </ligand>
</feature>
<feature type="binding site" evidence="1">
    <location>
        <position position="504"/>
    </location>
    <ligand>
        <name>a divalent metal cation</name>
        <dbReference type="ChEBI" id="CHEBI:60240"/>
        <label>2</label>
    </ligand>
</feature>
<feature type="binding site" evidence="1">
    <location>
        <position position="614"/>
    </location>
    <ligand>
        <name>a divalent metal cation</name>
        <dbReference type="ChEBI" id="CHEBI:60240"/>
        <label>1</label>
    </ligand>
</feature>
<comment type="function">
    <text evidence="5">Redundantly with pde-1, plays a role in the AFD thermosensory neurons to regulate microvilli receptive ending morphology, possibly by regulating cGMP levels.</text>
</comment>
<comment type="catalytic activity">
    <reaction>
        <text>a nucleoside 3',5'-cyclic phosphate + H2O = a nucleoside 5'-phosphate + H(+)</text>
        <dbReference type="Rhea" id="RHEA:14653"/>
        <dbReference type="ChEBI" id="CHEBI:15377"/>
        <dbReference type="ChEBI" id="CHEBI:15378"/>
        <dbReference type="ChEBI" id="CHEBI:57867"/>
        <dbReference type="ChEBI" id="CHEBI:58464"/>
        <dbReference type="EC" id="3.1.4.17"/>
    </reaction>
</comment>
<comment type="cofactor">
    <cofactor evidence="1">
        <name>a divalent metal cation</name>
        <dbReference type="ChEBI" id="CHEBI:60240"/>
    </cofactor>
    <text evidence="1">Binds 2 divalent metal cations per subunit. Site 1 may preferentially bind zinc ions, while site 2 has a preference for magnesium and/or manganese ions.</text>
</comment>
<comment type="similarity">
    <text evidence="6">Belongs to the cyclic nucleotide phosphodiesterase family.</text>
</comment>
<organism>
    <name type="scientific">Caenorhabditis elegans</name>
    <dbReference type="NCBI Taxonomy" id="6239"/>
    <lineage>
        <taxon>Eukaryota</taxon>
        <taxon>Metazoa</taxon>
        <taxon>Ecdysozoa</taxon>
        <taxon>Nematoda</taxon>
        <taxon>Chromadorea</taxon>
        <taxon>Rhabditida</taxon>
        <taxon>Rhabditina</taxon>
        <taxon>Rhabditomorpha</taxon>
        <taxon>Rhabditoidea</taxon>
        <taxon>Rhabditidae</taxon>
        <taxon>Peloderinae</taxon>
        <taxon>Caenorhabditis</taxon>
    </lineage>
</organism>
<reference key="1">
    <citation type="journal article" date="1998" name="Science">
        <title>Genome sequence of the nematode C. elegans: a platform for investigating biology.</title>
        <authorList>
            <consortium name="The C. elegans sequencing consortium"/>
        </authorList>
    </citation>
    <scope>NUCLEOTIDE SEQUENCE [LARGE SCALE GENOMIC DNA]</scope>
    <source>
        <strain>Bristol N2</strain>
    </source>
</reference>
<reference key="2">
    <citation type="journal article" date="2016" name="Cell">
        <title>A glial K/Cl transporter controls neuronal receptive ending shape by chloride inhibition of an rGC.</title>
        <authorList>
            <person name="Singhvi A."/>
            <person name="Liu B."/>
            <person name="Friedman C.J."/>
            <person name="Fong J."/>
            <person name="Lu Y."/>
            <person name="Huang X.Y."/>
            <person name="Shaham S."/>
        </authorList>
    </citation>
    <scope>FUNCTION</scope>
</reference>
<accession>P91119</accession>
<name>PDE5_CAEEL</name>
<proteinExistence type="inferred from homology"/>
<protein>
    <recommendedName>
        <fullName>Probable 3',5'-cyclic phosphodiesterase pde-5</fullName>
        <ecNumber>3.1.4.17</ecNumber>
    </recommendedName>
</protein>
<keyword id="KW-0140">cGMP</keyword>
<keyword id="KW-0175">Coiled coil</keyword>
<keyword id="KW-0378">Hydrolase</keyword>
<keyword id="KW-0479">Metal-binding</keyword>
<keyword id="KW-1185">Reference proteome</keyword>